<gene>
    <name type="primary">amt</name>
    <name type="ordered locus">Rv2920c</name>
    <name type="ORF">MTCY338.09c</name>
</gene>
<dbReference type="EMBL" id="AL123456">
    <property type="protein sequence ID" value="CCP45722.1"/>
    <property type="molecule type" value="Genomic_DNA"/>
</dbReference>
<dbReference type="PIR" id="H70747">
    <property type="entry name" value="H70747"/>
</dbReference>
<dbReference type="RefSeq" id="NP_217436.1">
    <property type="nucleotide sequence ID" value="NC_000962.3"/>
</dbReference>
<dbReference type="RefSeq" id="WP_003899540.1">
    <property type="nucleotide sequence ID" value="NZ_NVQJ01000006.1"/>
</dbReference>
<dbReference type="SMR" id="P9WQ65"/>
<dbReference type="FunCoup" id="P9WQ65">
    <property type="interactions" value="82"/>
</dbReference>
<dbReference type="STRING" id="83332.Rv2920c"/>
<dbReference type="PaxDb" id="83332-Rv2920c"/>
<dbReference type="DNASU" id="887683"/>
<dbReference type="GeneID" id="887683"/>
<dbReference type="KEGG" id="mtu:Rv2920c"/>
<dbReference type="KEGG" id="mtv:RVBD_2920c"/>
<dbReference type="PATRIC" id="fig|83332.111.peg.3249"/>
<dbReference type="TubercuList" id="Rv2920c"/>
<dbReference type="eggNOG" id="COG0004">
    <property type="taxonomic scope" value="Bacteria"/>
</dbReference>
<dbReference type="InParanoid" id="P9WQ65"/>
<dbReference type="OrthoDB" id="9814202at2"/>
<dbReference type="PhylomeDB" id="P9WQ65"/>
<dbReference type="Proteomes" id="UP000001584">
    <property type="component" value="Chromosome"/>
</dbReference>
<dbReference type="GO" id="GO:0005886">
    <property type="term" value="C:plasma membrane"/>
    <property type="evidence" value="ECO:0000318"/>
    <property type="project" value="GO_Central"/>
</dbReference>
<dbReference type="GO" id="GO:0008519">
    <property type="term" value="F:ammonium channel activity"/>
    <property type="evidence" value="ECO:0000318"/>
    <property type="project" value="GO_Central"/>
</dbReference>
<dbReference type="GO" id="GO:0072488">
    <property type="term" value="P:ammonium transmembrane transport"/>
    <property type="evidence" value="ECO:0000318"/>
    <property type="project" value="GO_Central"/>
</dbReference>
<dbReference type="FunFam" id="1.10.3430.10:FF:000007">
    <property type="entry name" value="Ammonium transporter"/>
    <property type="match status" value="1"/>
</dbReference>
<dbReference type="Gene3D" id="1.10.3430.10">
    <property type="entry name" value="Ammonium transporter AmtB like domains"/>
    <property type="match status" value="1"/>
</dbReference>
<dbReference type="InterPro" id="IPR029020">
    <property type="entry name" value="Ammonium/urea_transptr"/>
</dbReference>
<dbReference type="InterPro" id="IPR001905">
    <property type="entry name" value="Ammonium_transpt"/>
</dbReference>
<dbReference type="InterPro" id="IPR018047">
    <property type="entry name" value="Ammonium_transpt_CS"/>
</dbReference>
<dbReference type="InterPro" id="IPR024041">
    <property type="entry name" value="NH4_transpt_AmtB-like_dom"/>
</dbReference>
<dbReference type="NCBIfam" id="TIGR00836">
    <property type="entry name" value="amt"/>
    <property type="match status" value="1"/>
</dbReference>
<dbReference type="PANTHER" id="PTHR43029">
    <property type="entry name" value="AMMONIUM TRANSPORTER MEP2"/>
    <property type="match status" value="1"/>
</dbReference>
<dbReference type="PANTHER" id="PTHR43029:SF10">
    <property type="entry name" value="AMMONIUM TRANSPORTER MEP2"/>
    <property type="match status" value="1"/>
</dbReference>
<dbReference type="Pfam" id="PF00909">
    <property type="entry name" value="Ammonium_transp"/>
    <property type="match status" value="1"/>
</dbReference>
<dbReference type="SUPFAM" id="SSF111352">
    <property type="entry name" value="Ammonium transporter"/>
    <property type="match status" value="1"/>
</dbReference>
<dbReference type="PROSITE" id="PS01219">
    <property type="entry name" value="AMMONIUM_TRANSP"/>
    <property type="match status" value="1"/>
</dbReference>
<feature type="chain" id="PRO_0000139758" description="Ammonium transporter">
    <location>
        <begin position="1"/>
        <end position="477"/>
    </location>
</feature>
<feature type="transmembrane region" description="Helical" evidence="2">
    <location>
        <begin position="16"/>
        <end position="36"/>
    </location>
</feature>
<feature type="transmembrane region" description="Helical" evidence="2">
    <location>
        <begin position="53"/>
        <end position="73"/>
    </location>
</feature>
<feature type="transmembrane region" description="Helical" evidence="2">
    <location>
        <begin position="121"/>
        <end position="141"/>
    </location>
</feature>
<feature type="transmembrane region" description="Helical" evidence="2">
    <location>
        <begin position="150"/>
        <end position="170"/>
    </location>
</feature>
<feature type="transmembrane region" description="Helical" evidence="2">
    <location>
        <begin position="192"/>
        <end position="212"/>
    </location>
</feature>
<feature type="transmembrane region" description="Helical" evidence="2">
    <location>
        <begin position="229"/>
        <end position="249"/>
    </location>
</feature>
<feature type="transmembrane region" description="Helical" evidence="2">
    <location>
        <begin position="257"/>
        <end position="277"/>
    </location>
</feature>
<feature type="transmembrane region" description="Helical" evidence="2">
    <location>
        <begin position="290"/>
        <end position="310"/>
    </location>
</feature>
<feature type="transmembrane region" description="Helical" evidence="2">
    <location>
        <begin position="312"/>
        <end position="332"/>
    </location>
</feature>
<feature type="transmembrane region" description="Helical" evidence="2">
    <location>
        <begin position="344"/>
        <end position="364"/>
    </location>
</feature>
<feature type="transmembrane region" description="Helical" evidence="2">
    <location>
        <begin position="394"/>
        <end position="414"/>
    </location>
</feature>
<feature type="region of interest" description="Disordered" evidence="3">
    <location>
        <begin position="457"/>
        <end position="477"/>
    </location>
</feature>
<feature type="compositionally biased region" description="Basic and acidic residues" evidence="3">
    <location>
        <begin position="468"/>
        <end position="477"/>
    </location>
</feature>
<name>AMT_MYCTU</name>
<evidence type="ECO:0000250" key="1">
    <source>
        <dbReference type="UniProtKB" id="P69681"/>
    </source>
</evidence>
<evidence type="ECO:0000255" key="2"/>
<evidence type="ECO:0000256" key="3">
    <source>
        <dbReference type="SAM" id="MobiDB-lite"/>
    </source>
</evidence>
<evidence type="ECO:0000305" key="4"/>
<keyword id="KW-0924">Ammonia transport</keyword>
<keyword id="KW-1003">Cell membrane</keyword>
<keyword id="KW-0472">Membrane</keyword>
<keyword id="KW-1185">Reference proteome</keyword>
<keyword id="KW-0812">Transmembrane</keyword>
<keyword id="KW-1133">Transmembrane helix</keyword>
<keyword id="KW-0813">Transport</keyword>
<comment type="function">
    <text evidence="1">Involved in the uptake of ammonium/ammonia (NH(4)(+)/NH(3)).</text>
</comment>
<comment type="subunit">
    <text evidence="1">Homotrimer.</text>
</comment>
<comment type="subcellular location">
    <subcellularLocation>
        <location evidence="4">Cell membrane</location>
        <topology evidence="4">Multi-pass membrane protein</topology>
    </subcellularLocation>
</comment>
<comment type="similarity">
    <text evidence="4">Belongs to the ammonia transporter channel (TC 1.A.11.2) family.</text>
</comment>
<reference key="1">
    <citation type="journal article" date="1998" name="Nature">
        <title>Deciphering the biology of Mycobacterium tuberculosis from the complete genome sequence.</title>
        <authorList>
            <person name="Cole S.T."/>
            <person name="Brosch R."/>
            <person name="Parkhill J."/>
            <person name="Garnier T."/>
            <person name="Churcher C.M."/>
            <person name="Harris D.E."/>
            <person name="Gordon S.V."/>
            <person name="Eiglmeier K."/>
            <person name="Gas S."/>
            <person name="Barry C.E. III"/>
            <person name="Tekaia F."/>
            <person name="Badcock K."/>
            <person name="Basham D."/>
            <person name="Brown D."/>
            <person name="Chillingworth T."/>
            <person name="Connor R."/>
            <person name="Davies R.M."/>
            <person name="Devlin K."/>
            <person name="Feltwell T."/>
            <person name="Gentles S."/>
            <person name="Hamlin N."/>
            <person name="Holroyd S."/>
            <person name="Hornsby T."/>
            <person name="Jagels K."/>
            <person name="Krogh A."/>
            <person name="McLean J."/>
            <person name="Moule S."/>
            <person name="Murphy L.D."/>
            <person name="Oliver S."/>
            <person name="Osborne J."/>
            <person name="Quail M.A."/>
            <person name="Rajandream M.A."/>
            <person name="Rogers J."/>
            <person name="Rutter S."/>
            <person name="Seeger K."/>
            <person name="Skelton S."/>
            <person name="Squares S."/>
            <person name="Squares R."/>
            <person name="Sulston J.E."/>
            <person name="Taylor K."/>
            <person name="Whitehead S."/>
            <person name="Barrell B.G."/>
        </authorList>
    </citation>
    <scope>NUCLEOTIDE SEQUENCE [LARGE SCALE GENOMIC DNA]</scope>
    <source>
        <strain>ATCC 25618 / H37Rv</strain>
    </source>
</reference>
<proteinExistence type="inferred from homology"/>
<accession>P9WQ65</accession>
<accession>L0TDY4</accession>
<accession>P63519</accession>
<accession>Q10968</accession>
<organism>
    <name type="scientific">Mycobacterium tuberculosis (strain ATCC 25618 / H37Rv)</name>
    <dbReference type="NCBI Taxonomy" id="83332"/>
    <lineage>
        <taxon>Bacteria</taxon>
        <taxon>Bacillati</taxon>
        <taxon>Actinomycetota</taxon>
        <taxon>Actinomycetes</taxon>
        <taxon>Mycobacteriales</taxon>
        <taxon>Mycobacteriaceae</taxon>
        <taxon>Mycobacterium</taxon>
        <taxon>Mycobacterium tuberculosis complex</taxon>
    </lineage>
</organism>
<sequence>MDQFPIMGVPDGGDTAWMLVSSALVLLMTPGLAFFYGGMVRSKSVLNMIMMSISAMGVVTVLWALYGYSIAFGDDVGNIAGNPSQYWGLKGLIGVNAVAADPSTQTAAVNIPLAGTLPATVFVAFQLMFAIITVALISGAVADRLKFGAWLLFAGLWATFVYFPVAHWVFAFDGFAAEHGGWIANKLHAIDFAGGTAVHINAGVAALMLAIVLGKRRGWPATLFRPHNLPFVMLGAALLWFGWYGFNAGSATTANGVAGATFVTTTIATAAAMLGWLLTERVRDGKATTLGAASGIVAGLVAITPSCSSVNVLGALAVGVSAGVLCALAVGLKFKLGFDDSLDVVGVHLVGGLVGTLLVGLLAAPEAPAINGVAGVSKGLFYGGGFAQLERQALGACSVLVYSGIITLILALILKFTIGLRLDAEQESTGIDEAEHAESGYDFAVASGSVLPPRVTVEDSRNGIQERIGQKVEAEPK</sequence>
<protein>
    <recommendedName>
        <fullName evidence="1">Ammonium transporter</fullName>
    </recommendedName>
    <alternativeName>
        <fullName evidence="1">Ammonia channel</fullName>
    </alternativeName>
    <alternativeName>
        <fullName evidence="1">Ammonium channel</fullName>
    </alternativeName>
</protein>